<keyword id="KW-0067">ATP-binding</keyword>
<keyword id="KW-0963">Cytoplasm</keyword>
<keyword id="KW-0436">Ligase</keyword>
<keyword id="KW-0460">Magnesium</keyword>
<keyword id="KW-0479">Metal-binding</keyword>
<keyword id="KW-0535">Nitrogen fixation</keyword>
<keyword id="KW-0547">Nucleotide-binding</keyword>
<keyword id="KW-0597">Phosphoprotein</keyword>
<keyword id="KW-1185">Reference proteome</keyword>
<proteinExistence type="inferred from homology"/>
<accession>Q59747</accession>
<dbReference type="EC" id="6.3.1.2" evidence="1"/>
<dbReference type="EMBL" id="U50385">
    <property type="protein sequence ID" value="AAC44624.1"/>
    <property type="molecule type" value="Genomic_DNA"/>
</dbReference>
<dbReference type="EMBL" id="AL591688">
    <property type="protein sequence ID" value="CAC46219.1"/>
    <property type="molecule type" value="Genomic_DNA"/>
</dbReference>
<dbReference type="EMBL" id="AF169573">
    <property type="protein sequence ID" value="AAF18968.1"/>
    <property type="molecule type" value="Genomic_DNA"/>
</dbReference>
<dbReference type="RefSeq" id="NP_385746.1">
    <property type="nucleotide sequence ID" value="NC_003047.1"/>
</dbReference>
<dbReference type="RefSeq" id="WP_003528053.1">
    <property type="nucleotide sequence ID" value="NC_003047.1"/>
</dbReference>
<dbReference type="SMR" id="Q59747"/>
<dbReference type="EnsemblBacteria" id="CAC46219">
    <property type="protein sequence ID" value="CAC46219"/>
    <property type="gene ID" value="SMc00948"/>
</dbReference>
<dbReference type="GeneID" id="89575974"/>
<dbReference type="KEGG" id="sme:SMc00948"/>
<dbReference type="PATRIC" id="fig|266834.11.peg.3073"/>
<dbReference type="eggNOG" id="COG0174">
    <property type="taxonomic scope" value="Bacteria"/>
</dbReference>
<dbReference type="HOGENOM" id="CLU_017290_1_2_5"/>
<dbReference type="OrthoDB" id="9807095at2"/>
<dbReference type="Proteomes" id="UP000001976">
    <property type="component" value="Chromosome"/>
</dbReference>
<dbReference type="GO" id="GO:0005737">
    <property type="term" value="C:cytoplasm"/>
    <property type="evidence" value="ECO:0007669"/>
    <property type="project" value="UniProtKB-SubCell"/>
</dbReference>
<dbReference type="GO" id="GO:0016020">
    <property type="term" value="C:membrane"/>
    <property type="evidence" value="ECO:0007669"/>
    <property type="project" value="TreeGrafter"/>
</dbReference>
<dbReference type="GO" id="GO:0005524">
    <property type="term" value="F:ATP binding"/>
    <property type="evidence" value="ECO:0007669"/>
    <property type="project" value="UniProtKB-KW"/>
</dbReference>
<dbReference type="GO" id="GO:0004356">
    <property type="term" value="F:glutamine synthetase activity"/>
    <property type="evidence" value="ECO:0007669"/>
    <property type="project" value="UniProtKB-EC"/>
</dbReference>
<dbReference type="GO" id="GO:0046872">
    <property type="term" value="F:metal ion binding"/>
    <property type="evidence" value="ECO:0007669"/>
    <property type="project" value="UniProtKB-KW"/>
</dbReference>
<dbReference type="GO" id="GO:0006542">
    <property type="term" value="P:glutamine biosynthetic process"/>
    <property type="evidence" value="ECO:0007669"/>
    <property type="project" value="InterPro"/>
</dbReference>
<dbReference type="GO" id="GO:0009399">
    <property type="term" value="P:nitrogen fixation"/>
    <property type="evidence" value="ECO:0007669"/>
    <property type="project" value="UniProtKB-KW"/>
</dbReference>
<dbReference type="GO" id="GO:0019740">
    <property type="term" value="P:nitrogen utilization"/>
    <property type="evidence" value="ECO:0007669"/>
    <property type="project" value="TreeGrafter"/>
</dbReference>
<dbReference type="FunFam" id="3.10.20.70:FF:000001">
    <property type="entry name" value="Glutamine synthetase"/>
    <property type="match status" value="1"/>
</dbReference>
<dbReference type="FunFam" id="3.30.590.10:FF:000001">
    <property type="entry name" value="Glutamine synthetase"/>
    <property type="match status" value="1"/>
</dbReference>
<dbReference type="Gene3D" id="3.10.20.70">
    <property type="entry name" value="Glutamine synthetase, N-terminal domain"/>
    <property type="match status" value="1"/>
</dbReference>
<dbReference type="Gene3D" id="3.30.590.10">
    <property type="entry name" value="Glutamine synthetase/guanido kinase, catalytic domain"/>
    <property type="match status" value="1"/>
</dbReference>
<dbReference type="InterPro" id="IPR008147">
    <property type="entry name" value="Gln_synt_N"/>
</dbReference>
<dbReference type="InterPro" id="IPR036651">
    <property type="entry name" value="Gln_synt_N_sf"/>
</dbReference>
<dbReference type="InterPro" id="IPR014746">
    <property type="entry name" value="Gln_synth/guanido_kin_cat_dom"/>
</dbReference>
<dbReference type="InterPro" id="IPR008146">
    <property type="entry name" value="Gln_synth_cat_dom"/>
</dbReference>
<dbReference type="InterPro" id="IPR027303">
    <property type="entry name" value="Gln_synth_gly_rich_site"/>
</dbReference>
<dbReference type="InterPro" id="IPR004809">
    <property type="entry name" value="Gln_synth_I"/>
</dbReference>
<dbReference type="InterPro" id="IPR001637">
    <property type="entry name" value="Gln_synth_I_adenylation_site"/>
</dbReference>
<dbReference type="InterPro" id="IPR027302">
    <property type="entry name" value="Gln_synth_N_conserv_site"/>
</dbReference>
<dbReference type="NCBIfam" id="TIGR00653">
    <property type="entry name" value="GlnA"/>
    <property type="match status" value="1"/>
</dbReference>
<dbReference type="PANTHER" id="PTHR43407">
    <property type="entry name" value="GLUTAMINE SYNTHETASE"/>
    <property type="match status" value="1"/>
</dbReference>
<dbReference type="PANTHER" id="PTHR43407:SF2">
    <property type="entry name" value="GLUTAMINE SYNTHETASE"/>
    <property type="match status" value="1"/>
</dbReference>
<dbReference type="Pfam" id="PF00120">
    <property type="entry name" value="Gln-synt_C"/>
    <property type="match status" value="1"/>
</dbReference>
<dbReference type="Pfam" id="PF03951">
    <property type="entry name" value="Gln-synt_N"/>
    <property type="match status" value="1"/>
</dbReference>
<dbReference type="SMART" id="SM01230">
    <property type="entry name" value="Gln-synt_C"/>
    <property type="match status" value="1"/>
</dbReference>
<dbReference type="SUPFAM" id="SSF54368">
    <property type="entry name" value="Glutamine synthetase, N-terminal domain"/>
    <property type="match status" value="1"/>
</dbReference>
<dbReference type="SUPFAM" id="SSF55931">
    <property type="entry name" value="Glutamine synthetase/guanido kinase"/>
    <property type="match status" value="1"/>
</dbReference>
<dbReference type="PROSITE" id="PS00180">
    <property type="entry name" value="GLNA_1"/>
    <property type="match status" value="1"/>
</dbReference>
<dbReference type="PROSITE" id="PS00182">
    <property type="entry name" value="GLNA_ADENYLATION"/>
    <property type="match status" value="1"/>
</dbReference>
<dbReference type="PROSITE" id="PS00181">
    <property type="entry name" value="GLNA_ATP"/>
    <property type="match status" value="1"/>
</dbReference>
<dbReference type="PROSITE" id="PS51986">
    <property type="entry name" value="GS_BETA_GRASP"/>
    <property type="match status" value="1"/>
</dbReference>
<dbReference type="PROSITE" id="PS51987">
    <property type="entry name" value="GS_CATALYTIC"/>
    <property type="match status" value="1"/>
</dbReference>
<feature type="chain" id="PRO_0000153225" description="Glutamine synthetase">
    <location>
        <begin position="1"/>
        <end position="469"/>
    </location>
</feature>
<feature type="domain" description="GS beta-grasp" evidence="6">
    <location>
        <begin position="14"/>
        <end position="99"/>
    </location>
</feature>
<feature type="domain" description="GS catalytic" evidence="7">
    <location>
        <begin position="106"/>
        <end position="469"/>
    </location>
</feature>
<feature type="binding site" evidence="4">
    <location>
        <position position="131"/>
    </location>
    <ligand>
        <name>Mg(2+)</name>
        <dbReference type="ChEBI" id="CHEBI:18420"/>
        <label>1</label>
    </ligand>
</feature>
<feature type="binding site" evidence="4">
    <location>
        <position position="133"/>
    </location>
    <ligand>
        <name>Mg(2+)</name>
        <dbReference type="ChEBI" id="CHEBI:18420"/>
        <label>2</label>
    </ligand>
</feature>
<feature type="binding site" evidence="1">
    <location>
        <position position="209"/>
    </location>
    <ligand>
        <name>ATP</name>
        <dbReference type="ChEBI" id="CHEBI:30616"/>
    </ligand>
</feature>
<feature type="binding site" evidence="4">
    <location>
        <position position="214"/>
    </location>
    <ligand>
        <name>Mg(2+)</name>
        <dbReference type="ChEBI" id="CHEBI:18420"/>
        <label>2</label>
    </ligand>
</feature>
<feature type="binding site" evidence="4">
    <location>
        <position position="221"/>
    </location>
    <ligand>
        <name>Mg(2+)</name>
        <dbReference type="ChEBI" id="CHEBI:18420"/>
        <label>2</label>
    </ligand>
</feature>
<feature type="binding site" evidence="1">
    <location>
        <begin position="265"/>
        <end position="266"/>
    </location>
    <ligand>
        <name>L-glutamate</name>
        <dbReference type="ChEBI" id="CHEBI:29985"/>
    </ligand>
</feature>
<feature type="binding site" evidence="2">
    <location>
        <position position="266"/>
    </location>
    <ligand>
        <name>L-glutamate</name>
        <dbReference type="ChEBI" id="CHEBI:29985"/>
    </ligand>
</feature>
<feature type="binding site" evidence="4">
    <location>
        <position position="270"/>
    </location>
    <ligand>
        <name>Mg(2+)</name>
        <dbReference type="ChEBI" id="CHEBI:18420"/>
        <label>1</label>
    </ligand>
</feature>
<feature type="binding site" evidence="1">
    <location>
        <begin position="272"/>
        <end position="274"/>
    </location>
    <ligand>
        <name>ATP</name>
        <dbReference type="ChEBI" id="CHEBI:30616"/>
    </ligand>
</feature>
<feature type="binding site" evidence="3">
    <location>
        <position position="274"/>
    </location>
    <ligand>
        <name>ATP</name>
        <dbReference type="ChEBI" id="CHEBI:30616"/>
    </ligand>
</feature>
<feature type="binding site" evidence="1">
    <location>
        <position position="322"/>
    </location>
    <ligand>
        <name>L-glutamate</name>
        <dbReference type="ChEBI" id="CHEBI:29985"/>
    </ligand>
</feature>
<feature type="binding site" evidence="1">
    <location>
        <position position="328"/>
    </location>
    <ligand>
        <name>L-glutamate</name>
        <dbReference type="ChEBI" id="CHEBI:29985"/>
    </ligand>
</feature>
<feature type="binding site" evidence="4">
    <location>
        <position position="340"/>
    </location>
    <ligand>
        <name>ATP</name>
        <dbReference type="ChEBI" id="CHEBI:30616"/>
    </ligand>
</feature>
<feature type="binding site" evidence="4">
    <location>
        <position position="340"/>
    </location>
    <ligand>
        <name>L-glutamate</name>
        <dbReference type="ChEBI" id="CHEBI:29985"/>
    </ligand>
</feature>
<feature type="binding site" evidence="4">
    <location>
        <position position="345"/>
    </location>
    <ligand>
        <name>ATP</name>
        <dbReference type="ChEBI" id="CHEBI:30616"/>
    </ligand>
</feature>
<feature type="binding site" evidence="3">
    <location>
        <position position="353"/>
    </location>
    <ligand>
        <name>ATP</name>
        <dbReference type="ChEBI" id="CHEBI:30616"/>
    </ligand>
</feature>
<feature type="binding site" evidence="4">
    <location>
        <position position="358"/>
    </location>
    <ligand>
        <name>Mg(2+)</name>
        <dbReference type="ChEBI" id="CHEBI:18420"/>
        <label>1</label>
    </ligand>
</feature>
<feature type="binding site" evidence="1">
    <location>
        <position position="360"/>
    </location>
    <ligand>
        <name>L-glutamate</name>
        <dbReference type="ChEBI" id="CHEBI:29985"/>
    </ligand>
</feature>
<feature type="modified residue" description="O-AMP-tyrosine" evidence="4">
    <location>
        <position position="398"/>
    </location>
</feature>
<feature type="sequence conflict" description="In Ref. 1; AAC44624." evidence="8" ref="1">
    <original>AKR</original>
    <variation>PNG</variation>
    <location>
        <begin position="354"/>
        <end position="356"/>
    </location>
</feature>
<comment type="function">
    <text evidence="1">Catalyzes the ATP-dependent biosynthesis of glutamine from glutamate and ammonia.</text>
</comment>
<comment type="catalytic activity">
    <reaction evidence="1">
        <text>L-glutamate + NH4(+) + ATP = L-glutamine + ADP + phosphate + H(+)</text>
        <dbReference type="Rhea" id="RHEA:16169"/>
        <dbReference type="ChEBI" id="CHEBI:15378"/>
        <dbReference type="ChEBI" id="CHEBI:28938"/>
        <dbReference type="ChEBI" id="CHEBI:29985"/>
        <dbReference type="ChEBI" id="CHEBI:30616"/>
        <dbReference type="ChEBI" id="CHEBI:43474"/>
        <dbReference type="ChEBI" id="CHEBI:58359"/>
        <dbReference type="ChEBI" id="CHEBI:456216"/>
        <dbReference type="EC" id="6.3.1.2"/>
    </reaction>
</comment>
<comment type="cofactor">
    <cofactor evidence="4">
        <name>Mg(2+)</name>
        <dbReference type="ChEBI" id="CHEBI:18420"/>
    </cofactor>
    <text evidence="4">Binds 2 Mg(2+) ions per subunit.</text>
</comment>
<comment type="activity regulation">
    <text evidence="5">The activity of this enzyme could be controlled by adenylation under conditions of abundant glutamine.</text>
</comment>
<comment type="subunit">
    <text evidence="1">Oligomer of 12 subunits arranged in the form of two hexameric ring.</text>
</comment>
<comment type="subcellular location">
    <subcellularLocation>
        <location evidence="4">Cytoplasm</location>
    </subcellularLocation>
</comment>
<comment type="miscellaneous">
    <text evidence="8">Two forms of glutamine synthetase (GSI and GSIII) can be found in this nitrogen fixing bacteria, GSI is a typical prokaryotic glutamine synthetase whereas GSIII is a divergent type with very low sequence similarity to the type I and II enzymes.</text>
</comment>
<comment type="similarity">
    <text evidence="8">Belongs to the glutamine synthetase family.</text>
</comment>
<protein>
    <recommendedName>
        <fullName evidence="1">Glutamine synthetase</fullName>
        <shortName evidence="1">GS</shortName>
        <ecNumber evidence="1">6.3.1.2</ecNumber>
    </recommendedName>
    <alternativeName>
        <fullName evidence="8">Glutamate--ammonia ligase</fullName>
    </alternativeName>
    <alternativeName>
        <fullName evidence="1">Glutamine synthetase I beta</fullName>
        <shortName evidence="1">GSI beta</shortName>
    </alternativeName>
</protein>
<gene>
    <name evidence="1" type="primary">glnA</name>
    <name type="ordered locus">R01640</name>
    <name type="ORF">SMc00948</name>
</gene>
<sequence>MTTANEVLKQIKENDVKFVDLRFTDPKGKLQHVTMDVVCVDEDMFADGVMFDGSSIGGWKAINESDMVLMPDPETAHMDPFFAQSTMVIFCDILDPVSGEAYNRDPRGTAKKAEAYLKASGIGDTVFVGPEAEFFVFDDVKYKADPYNTGFKLDSSELPSNDDTDYETGNLGHRPRVKGGYFPVPPVDSSQDMRSEMLTVLSEMGVTVEKHHHEVAAAQHELGVKFDALVRNADKMQIYKYVVHQVANAYGKTATFMPKPIFGDNGSGMHVHLSIWKDGKPTFAGDEYAGLSESCLYFIGGIIKHAKALNAFTNPSTNSYKRLVPGYEAPVLLAYSARNRSASCRIPFGTNPKAKRVEVRFPDPTANPYLAFAAMLMAGLDGIKNKLHPGKAMDKDLYDLPPKELKKIPTVCGSLREALESLDKDRKFLTAGGVFDDDQIDSFIELKMQEVMRFEMTPHPVEFDMYYSV</sequence>
<reference key="1">
    <citation type="journal article" date="1996" name="FEMS Microbiol. Lett.">
        <title>Symbiotic nitrogen fixation does not require adenylylation of glutamine synthetase I in Rhizobium meliloti.</title>
        <authorList>
            <person name="Arcondeguy T."/>
            <person name="Huez I."/>
            <person name="Fourment J."/>
            <person name="Kahn D."/>
        </authorList>
    </citation>
    <scope>NUCLEOTIDE SEQUENCE [GENOMIC DNA]</scope>
    <source>
        <strain>RCR2011 / SU47</strain>
    </source>
</reference>
<reference key="2">
    <citation type="journal article" date="2001" name="Proc. Natl. Acad. Sci. U.S.A.">
        <title>Analysis of the chromosome sequence of the legume symbiont Sinorhizobium meliloti strain 1021.</title>
        <authorList>
            <person name="Capela D."/>
            <person name="Barloy-Hubler F."/>
            <person name="Gouzy J."/>
            <person name="Bothe G."/>
            <person name="Ampe F."/>
            <person name="Batut J."/>
            <person name="Boistard P."/>
            <person name="Becker A."/>
            <person name="Boutry M."/>
            <person name="Cadieu E."/>
            <person name="Dreano S."/>
            <person name="Gloux S."/>
            <person name="Godrie T."/>
            <person name="Goffeau A."/>
            <person name="Kahn D."/>
            <person name="Kiss E."/>
            <person name="Lelaure V."/>
            <person name="Masuy D."/>
            <person name="Pohl T."/>
            <person name="Portetelle D."/>
            <person name="Puehler A."/>
            <person name="Purnelle B."/>
            <person name="Ramsperger U."/>
            <person name="Renard C."/>
            <person name="Thebault P."/>
            <person name="Vandenbol M."/>
            <person name="Weidner S."/>
            <person name="Galibert F."/>
        </authorList>
    </citation>
    <scope>NUCLEOTIDE SEQUENCE [LARGE SCALE GENOMIC DNA]</scope>
    <source>
        <strain>1021</strain>
    </source>
</reference>
<reference key="3">
    <citation type="journal article" date="2001" name="Science">
        <title>The composite genome of the legume symbiont Sinorhizobium meliloti.</title>
        <authorList>
            <person name="Galibert F."/>
            <person name="Finan T.M."/>
            <person name="Long S.R."/>
            <person name="Puehler A."/>
            <person name="Abola P."/>
            <person name="Ampe F."/>
            <person name="Barloy-Hubler F."/>
            <person name="Barnett M.J."/>
            <person name="Becker A."/>
            <person name="Boistard P."/>
            <person name="Bothe G."/>
            <person name="Boutry M."/>
            <person name="Bowser L."/>
            <person name="Buhrmester J."/>
            <person name="Cadieu E."/>
            <person name="Capela D."/>
            <person name="Chain P."/>
            <person name="Cowie A."/>
            <person name="Davis R.W."/>
            <person name="Dreano S."/>
            <person name="Federspiel N.A."/>
            <person name="Fisher R.F."/>
            <person name="Gloux S."/>
            <person name="Godrie T."/>
            <person name="Goffeau A."/>
            <person name="Golding B."/>
            <person name="Gouzy J."/>
            <person name="Gurjal M."/>
            <person name="Hernandez-Lucas I."/>
            <person name="Hong A."/>
            <person name="Huizar L."/>
            <person name="Hyman R.W."/>
            <person name="Jones T."/>
            <person name="Kahn D."/>
            <person name="Kahn M.L."/>
            <person name="Kalman S."/>
            <person name="Keating D.H."/>
            <person name="Kiss E."/>
            <person name="Komp C."/>
            <person name="Lelaure V."/>
            <person name="Masuy D."/>
            <person name="Palm C."/>
            <person name="Peck M.C."/>
            <person name="Pohl T.M."/>
            <person name="Portetelle D."/>
            <person name="Purnelle B."/>
            <person name="Ramsperger U."/>
            <person name="Surzycki R."/>
            <person name="Thebault P."/>
            <person name="Vandenbol M."/>
            <person name="Vorhoelter F.J."/>
            <person name="Weidner S."/>
            <person name="Wells D.H."/>
            <person name="Wong K."/>
            <person name="Yeh K.-C."/>
            <person name="Batut J."/>
        </authorList>
    </citation>
    <scope>NUCLEOTIDE SEQUENCE [LARGE SCALE GENOMIC DNA]</scope>
    <source>
        <strain>1021</strain>
    </source>
</reference>
<reference key="4">
    <citation type="journal article" date="2000" name="Mol. Biol. Evol.">
        <title>The glutamine synthetases of rhizobia: phylogenetics and evolutionary implications.</title>
        <authorList>
            <person name="Turner S.L."/>
            <person name="Young J.P.W."/>
        </authorList>
    </citation>
    <scope>NUCLEOTIDE SEQUENCE [GENOMIC DNA] OF 49-362</scope>
    <source>
        <strain>ATCC 9930 / USDA 1002 / DSM 30135 / JCM 20682 / LMG 6133 / NBRC 14782 / NRRL L-45</strain>
    </source>
</reference>
<name>GLN1B_RHIME</name>
<evidence type="ECO:0000250" key="1">
    <source>
        <dbReference type="UniProtKB" id="P0A1P6"/>
    </source>
</evidence>
<evidence type="ECO:0000250" key="2">
    <source>
        <dbReference type="UniProtKB" id="P12425"/>
    </source>
</evidence>
<evidence type="ECO:0000250" key="3">
    <source>
        <dbReference type="UniProtKB" id="P77961"/>
    </source>
</evidence>
<evidence type="ECO:0000250" key="4">
    <source>
        <dbReference type="UniProtKB" id="P9WN39"/>
    </source>
</evidence>
<evidence type="ECO:0000250" key="5">
    <source>
        <dbReference type="UniProtKB" id="Q3V5W6"/>
    </source>
</evidence>
<evidence type="ECO:0000255" key="6">
    <source>
        <dbReference type="PROSITE-ProRule" id="PRU01330"/>
    </source>
</evidence>
<evidence type="ECO:0000255" key="7">
    <source>
        <dbReference type="PROSITE-ProRule" id="PRU01331"/>
    </source>
</evidence>
<evidence type="ECO:0000305" key="8"/>
<organism>
    <name type="scientific">Rhizobium meliloti (strain 1021)</name>
    <name type="common">Ensifer meliloti</name>
    <name type="synonym">Sinorhizobium meliloti</name>
    <dbReference type="NCBI Taxonomy" id="266834"/>
    <lineage>
        <taxon>Bacteria</taxon>
        <taxon>Pseudomonadati</taxon>
        <taxon>Pseudomonadota</taxon>
        <taxon>Alphaproteobacteria</taxon>
        <taxon>Hyphomicrobiales</taxon>
        <taxon>Rhizobiaceae</taxon>
        <taxon>Sinorhizobium/Ensifer group</taxon>
        <taxon>Sinorhizobium</taxon>
    </lineage>
</organism>